<organism>
    <name type="scientific">Escherichia coli O6:K15:H31 (strain 536 / UPEC)</name>
    <dbReference type="NCBI Taxonomy" id="362663"/>
    <lineage>
        <taxon>Bacteria</taxon>
        <taxon>Pseudomonadati</taxon>
        <taxon>Pseudomonadota</taxon>
        <taxon>Gammaproteobacteria</taxon>
        <taxon>Enterobacterales</taxon>
        <taxon>Enterobacteriaceae</taxon>
        <taxon>Escherichia</taxon>
    </lineage>
</organism>
<keyword id="KW-0067">ATP-binding</keyword>
<keyword id="KW-0547">Nucleotide-binding</keyword>
<keyword id="KW-0808">Transferase</keyword>
<sequence length="292" mass="31621">MSMPATSTKTTKLATSLIDEYALLGWRAMLTEVNLSPKPGLVDRINCGAHKDMALEDFHRSALAIQGWLPRFIEFGACSAEMAPEAVLNGLRPIGMACEGDMFRATAGVNTHKGSIFSLGLLCAAIGRLLQLNQPVTPTTVCSTAASFCRGLTDRELRTNNARLTAGQRLYQQLGLTGARGEAEAGYPLVINHALPHYLTLLDQGLDPELALLDTLLLLMATNGDTNVASRGGEGGLRWLQREAQTLLQKGGIRTPADLDYLRQFDRECIERNLSPGGSADLLILTWFLAQI</sequence>
<proteinExistence type="inferred from homology"/>
<name>CITG_ECOL5</name>
<dbReference type="EC" id="2.4.2.52" evidence="1"/>
<dbReference type="EMBL" id="CP000247">
    <property type="protein sequence ID" value="ABG68672.1"/>
    <property type="molecule type" value="Genomic_DNA"/>
</dbReference>
<dbReference type="RefSeq" id="WP_000062470.1">
    <property type="nucleotide sequence ID" value="NC_008253.1"/>
</dbReference>
<dbReference type="KEGG" id="ecp:ECP_0644"/>
<dbReference type="HOGENOM" id="CLU_056179_1_0_6"/>
<dbReference type="Proteomes" id="UP000009182">
    <property type="component" value="Chromosome"/>
</dbReference>
<dbReference type="GO" id="GO:0005524">
    <property type="term" value="F:ATP binding"/>
    <property type="evidence" value="ECO:0007669"/>
    <property type="project" value="UniProtKB-KW"/>
</dbReference>
<dbReference type="GO" id="GO:0046917">
    <property type="term" value="F:triphosphoribosyl-dephospho-CoA synthase activity"/>
    <property type="evidence" value="ECO:0007669"/>
    <property type="project" value="UniProtKB-UniRule"/>
</dbReference>
<dbReference type="GO" id="GO:0051191">
    <property type="term" value="P:prosthetic group biosynthetic process"/>
    <property type="evidence" value="ECO:0007669"/>
    <property type="project" value="TreeGrafter"/>
</dbReference>
<dbReference type="FunFam" id="1.10.4200.10:FF:000001">
    <property type="entry name" value="Triphosphoribosyl-dephospho-CoA synthase CitG"/>
    <property type="match status" value="1"/>
</dbReference>
<dbReference type="Gene3D" id="1.10.4200.10">
    <property type="entry name" value="Triphosphoribosyl-dephospho-CoA protein"/>
    <property type="match status" value="1"/>
</dbReference>
<dbReference type="HAMAP" id="MF_00397">
    <property type="entry name" value="CitG"/>
    <property type="match status" value="1"/>
</dbReference>
<dbReference type="InterPro" id="IPR002736">
    <property type="entry name" value="CitG"/>
</dbReference>
<dbReference type="InterPro" id="IPR017551">
    <property type="entry name" value="TriPribosyl-deP-CoA_syn_CitG"/>
</dbReference>
<dbReference type="NCBIfam" id="TIGR03125">
    <property type="entry name" value="citrate_citG"/>
    <property type="match status" value="1"/>
</dbReference>
<dbReference type="NCBIfam" id="NF007503">
    <property type="entry name" value="PRK10096.1"/>
    <property type="match status" value="1"/>
</dbReference>
<dbReference type="PANTHER" id="PTHR30201:SF2">
    <property type="entry name" value="2-(5''-TRIPHOSPHORIBOSYL)-3'-DEPHOSPHOCOENZYME-A SYNTHASE"/>
    <property type="match status" value="1"/>
</dbReference>
<dbReference type="PANTHER" id="PTHR30201">
    <property type="entry name" value="TRIPHOSPHORIBOSYL-DEPHOSPHO-COA SYNTHASE"/>
    <property type="match status" value="1"/>
</dbReference>
<dbReference type="Pfam" id="PF01874">
    <property type="entry name" value="CitG"/>
    <property type="match status" value="1"/>
</dbReference>
<accession>Q0TK59</accession>
<reference key="1">
    <citation type="journal article" date="2006" name="Mol. Microbiol.">
        <title>Role of pathogenicity island-associated integrases in the genome plasticity of uropathogenic Escherichia coli strain 536.</title>
        <authorList>
            <person name="Hochhut B."/>
            <person name="Wilde C."/>
            <person name="Balling G."/>
            <person name="Middendorf B."/>
            <person name="Dobrindt U."/>
            <person name="Brzuszkiewicz E."/>
            <person name="Gottschalk G."/>
            <person name="Carniel E."/>
            <person name="Hacker J."/>
        </authorList>
    </citation>
    <scope>NUCLEOTIDE SEQUENCE [LARGE SCALE GENOMIC DNA]</scope>
    <source>
        <strain>536 / UPEC</strain>
    </source>
</reference>
<evidence type="ECO:0000255" key="1">
    <source>
        <dbReference type="HAMAP-Rule" id="MF_00397"/>
    </source>
</evidence>
<protein>
    <recommendedName>
        <fullName evidence="1">2-(5''-triphosphoribosyl)-3'-dephosphocoenzyme-A synthase</fullName>
        <shortName evidence="1">2-(5''-triphosphoribosyl)-3'-dephospho-CoA synthase</shortName>
        <ecNumber evidence="1">2.4.2.52</ecNumber>
    </recommendedName>
</protein>
<gene>
    <name evidence="1" type="primary">citG</name>
    <name type="ordered locus">ECP_0644</name>
</gene>
<comment type="function">
    <text evidence="1">Catalyzes the formation of 2-(5''-triphosphoribosyl)-3'-dephosphocoenzyme-A, the precursor of the prosthetic group of the holo-acyl carrier protein (gamma chain) of citrate lyase, from ATP and dephospho-CoA.</text>
</comment>
<comment type="catalytic activity">
    <reaction evidence="1">
        <text>3'-dephospho-CoA + ATP = 2'-(5''-triphospho-alpha-D-ribosyl)-3'-dephospho-CoA + adenine</text>
        <dbReference type="Rhea" id="RHEA:15117"/>
        <dbReference type="ChEBI" id="CHEBI:16708"/>
        <dbReference type="ChEBI" id="CHEBI:30616"/>
        <dbReference type="ChEBI" id="CHEBI:57328"/>
        <dbReference type="ChEBI" id="CHEBI:61378"/>
        <dbReference type="EC" id="2.4.2.52"/>
    </reaction>
</comment>
<comment type="similarity">
    <text evidence="1">Belongs to the CitG/MdcB family.</text>
</comment>
<feature type="chain" id="PRO_0000255400" description="2-(5''-triphosphoribosyl)-3'-dephosphocoenzyme-A synthase">
    <location>
        <begin position="1"/>
        <end position="292"/>
    </location>
</feature>